<evidence type="ECO:0000255" key="1">
    <source>
        <dbReference type="HAMAP-Rule" id="MF_00332"/>
    </source>
</evidence>
<evidence type="ECO:0000256" key="2">
    <source>
        <dbReference type="SAM" id="MobiDB-lite"/>
    </source>
</evidence>
<sequence>MGKIIGIDLGTTNSCVAIMEGNTTRVIENSEGARTTPSIIAYQEDGEILVGASAKRQAVTNPKNTIYAAKRLIGRKFEEKEVQKDIDLMPYTIAKADNGDAWVEVRGNKLAPPQISAEVLRKMKKTAEDYLGEPVTEAVITVPAYFNDAQRQATKDAGRIAGLDVKRIINEPTAAALAFGLDKQEKGDRKIAVYDLGGGTFDVSIIEIADVDGEKQFEVLSTNGDTFLGGEDFDQRIIDYIIAEFKKEQGVDLSKDVLALQRLKEAAEKAKIELSSSAATDINLPYITADASGPKHLNIKLTRAKLESLVEELIERTIAPCRTAIKDAGISVSDIHDVILVGGMTRMPKVQEKVKEFFGKEPRKDVNPDEAVAVGAAIQGQVLSGDRKDVLLLDVTPLSLGIETLGGVMTKMITKNTTIPTKFAQTFSTADDNQPAVTIKVFQGEREIASANKLLGEFNLEGIPPAGRGVPQIEVTFDIDANGILHVSAKDKGTGKENKITIKANSGLSEDEIQKMVKDAELNAADDKKKLELVQARNQGEAAVHSVTKSLSEHGDKLEAGEKETIEAAVKDLEAALKGEDKAAIEEKTNALMAASQKLGEKMYADAQAAAAAAGAGAEAGPAAGQAASSAGGASSAPHDDNVVDAEVKEVKKG</sequence>
<comment type="function">
    <text evidence="1">Acts as a chaperone.</text>
</comment>
<comment type="induction">
    <text evidence="1">By stress conditions e.g. heat shock.</text>
</comment>
<comment type="similarity">
    <text evidence="1">Belongs to the heat shock protein 70 family.</text>
</comment>
<dbReference type="EMBL" id="CP000512">
    <property type="protein sequence ID" value="ABM31817.1"/>
    <property type="molecule type" value="Genomic_DNA"/>
</dbReference>
<dbReference type="RefSeq" id="WP_011794369.1">
    <property type="nucleotide sequence ID" value="NC_008752.1"/>
</dbReference>
<dbReference type="SMR" id="A1TLH9"/>
<dbReference type="STRING" id="397945.Aave_1226"/>
<dbReference type="GeneID" id="79790887"/>
<dbReference type="KEGG" id="aav:Aave_1226"/>
<dbReference type="eggNOG" id="COG0443">
    <property type="taxonomic scope" value="Bacteria"/>
</dbReference>
<dbReference type="HOGENOM" id="CLU_005965_2_1_4"/>
<dbReference type="OrthoDB" id="9766019at2"/>
<dbReference type="Proteomes" id="UP000002596">
    <property type="component" value="Chromosome"/>
</dbReference>
<dbReference type="GO" id="GO:0005524">
    <property type="term" value="F:ATP binding"/>
    <property type="evidence" value="ECO:0007669"/>
    <property type="project" value="UniProtKB-UniRule"/>
</dbReference>
<dbReference type="GO" id="GO:0140662">
    <property type="term" value="F:ATP-dependent protein folding chaperone"/>
    <property type="evidence" value="ECO:0007669"/>
    <property type="project" value="InterPro"/>
</dbReference>
<dbReference type="GO" id="GO:0051082">
    <property type="term" value="F:unfolded protein binding"/>
    <property type="evidence" value="ECO:0007669"/>
    <property type="project" value="InterPro"/>
</dbReference>
<dbReference type="CDD" id="cd10234">
    <property type="entry name" value="ASKHA_NBD_HSP70_DnaK-like"/>
    <property type="match status" value="1"/>
</dbReference>
<dbReference type="FunFam" id="2.60.34.10:FF:000014">
    <property type="entry name" value="Chaperone protein DnaK HSP70"/>
    <property type="match status" value="1"/>
</dbReference>
<dbReference type="FunFam" id="1.20.1270.10:FF:000001">
    <property type="entry name" value="Molecular chaperone DnaK"/>
    <property type="match status" value="1"/>
</dbReference>
<dbReference type="FunFam" id="3.30.420.40:FF:000004">
    <property type="entry name" value="Molecular chaperone DnaK"/>
    <property type="match status" value="1"/>
</dbReference>
<dbReference type="FunFam" id="3.90.640.10:FF:000003">
    <property type="entry name" value="Molecular chaperone DnaK"/>
    <property type="match status" value="1"/>
</dbReference>
<dbReference type="Gene3D" id="1.20.1270.10">
    <property type="match status" value="1"/>
</dbReference>
<dbReference type="Gene3D" id="3.30.420.40">
    <property type="match status" value="2"/>
</dbReference>
<dbReference type="Gene3D" id="3.90.640.10">
    <property type="entry name" value="Actin, Chain A, domain 4"/>
    <property type="match status" value="1"/>
</dbReference>
<dbReference type="Gene3D" id="2.60.34.10">
    <property type="entry name" value="Substrate Binding Domain Of DNAk, Chain A, domain 1"/>
    <property type="match status" value="1"/>
</dbReference>
<dbReference type="HAMAP" id="MF_00332">
    <property type="entry name" value="DnaK"/>
    <property type="match status" value="1"/>
</dbReference>
<dbReference type="InterPro" id="IPR043129">
    <property type="entry name" value="ATPase_NBD"/>
</dbReference>
<dbReference type="InterPro" id="IPR012725">
    <property type="entry name" value="Chaperone_DnaK"/>
</dbReference>
<dbReference type="InterPro" id="IPR018181">
    <property type="entry name" value="Heat_shock_70_CS"/>
</dbReference>
<dbReference type="InterPro" id="IPR029048">
    <property type="entry name" value="HSP70_C_sf"/>
</dbReference>
<dbReference type="InterPro" id="IPR029047">
    <property type="entry name" value="HSP70_peptide-bd_sf"/>
</dbReference>
<dbReference type="InterPro" id="IPR013126">
    <property type="entry name" value="Hsp_70_fam"/>
</dbReference>
<dbReference type="NCBIfam" id="NF001413">
    <property type="entry name" value="PRK00290.1"/>
    <property type="match status" value="1"/>
</dbReference>
<dbReference type="NCBIfam" id="NF003520">
    <property type="entry name" value="PRK05183.1"/>
    <property type="match status" value="1"/>
</dbReference>
<dbReference type="NCBIfam" id="TIGR02350">
    <property type="entry name" value="prok_dnaK"/>
    <property type="match status" value="1"/>
</dbReference>
<dbReference type="PANTHER" id="PTHR19375">
    <property type="entry name" value="HEAT SHOCK PROTEIN 70KDA"/>
    <property type="match status" value="1"/>
</dbReference>
<dbReference type="Pfam" id="PF00012">
    <property type="entry name" value="HSP70"/>
    <property type="match status" value="1"/>
</dbReference>
<dbReference type="PRINTS" id="PR00301">
    <property type="entry name" value="HEATSHOCK70"/>
</dbReference>
<dbReference type="SUPFAM" id="SSF53067">
    <property type="entry name" value="Actin-like ATPase domain"/>
    <property type="match status" value="2"/>
</dbReference>
<dbReference type="SUPFAM" id="SSF100934">
    <property type="entry name" value="Heat shock protein 70kD (HSP70), C-terminal subdomain"/>
    <property type="match status" value="1"/>
</dbReference>
<dbReference type="SUPFAM" id="SSF100920">
    <property type="entry name" value="Heat shock protein 70kD (HSP70), peptide-binding domain"/>
    <property type="match status" value="1"/>
</dbReference>
<dbReference type="PROSITE" id="PS00297">
    <property type="entry name" value="HSP70_1"/>
    <property type="match status" value="1"/>
</dbReference>
<dbReference type="PROSITE" id="PS00329">
    <property type="entry name" value="HSP70_2"/>
    <property type="match status" value="1"/>
</dbReference>
<dbReference type="PROSITE" id="PS01036">
    <property type="entry name" value="HSP70_3"/>
    <property type="match status" value="1"/>
</dbReference>
<accession>A1TLH9</accession>
<organism>
    <name type="scientific">Paracidovorax citrulli (strain AAC00-1)</name>
    <name type="common">Acidovorax citrulli</name>
    <dbReference type="NCBI Taxonomy" id="397945"/>
    <lineage>
        <taxon>Bacteria</taxon>
        <taxon>Pseudomonadati</taxon>
        <taxon>Pseudomonadota</taxon>
        <taxon>Betaproteobacteria</taxon>
        <taxon>Burkholderiales</taxon>
        <taxon>Comamonadaceae</taxon>
        <taxon>Paracidovorax</taxon>
    </lineage>
</organism>
<reference key="1">
    <citation type="submission" date="2006-12" db="EMBL/GenBank/DDBJ databases">
        <title>Complete sequence of Acidovorax avenae subsp. citrulli AAC00-1.</title>
        <authorList>
            <person name="Copeland A."/>
            <person name="Lucas S."/>
            <person name="Lapidus A."/>
            <person name="Barry K."/>
            <person name="Detter J.C."/>
            <person name="Glavina del Rio T."/>
            <person name="Dalin E."/>
            <person name="Tice H."/>
            <person name="Pitluck S."/>
            <person name="Kiss H."/>
            <person name="Brettin T."/>
            <person name="Bruce D."/>
            <person name="Han C."/>
            <person name="Tapia R."/>
            <person name="Gilna P."/>
            <person name="Schmutz J."/>
            <person name="Larimer F."/>
            <person name="Land M."/>
            <person name="Hauser L."/>
            <person name="Kyrpides N."/>
            <person name="Kim E."/>
            <person name="Stahl D."/>
            <person name="Richardson P."/>
        </authorList>
    </citation>
    <scope>NUCLEOTIDE SEQUENCE [LARGE SCALE GENOMIC DNA]</scope>
    <source>
        <strain>AAC00-1</strain>
    </source>
</reference>
<feature type="chain" id="PRO_1000059495" description="Chaperone protein DnaK">
    <location>
        <begin position="1"/>
        <end position="654"/>
    </location>
</feature>
<feature type="region of interest" description="Disordered" evidence="2">
    <location>
        <begin position="610"/>
        <end position="654"/>
    </location>
</feature>
<feature type="compositionally biased region" description="Low complexity" evidence="2">
    <location>
        <begin position="610"/>
        <end position="637"/>
    </location>
</feature>
<feature type="compositionally biased region" description="Basic and acidic residues" evidence="2">
    <location>
        <begin position="638"/>
        <end position="654"/>
    </location>
</feature>
<feature type="modified residue" description="Phosphothreonine; by autocatalysis" evidence="1">
    <location>
        <position position="200"/>
    </location>
</feature>
<name>DNAK_PARC0</name>
<proteinExistence type="inferred from homology"/>
<keyword id="KW-0067">ATP-binding</keyword>
<keyword id="KW-0143">Chaperone</keyword>
<keyword id="KW-0547">Nucleotide-binding</keyword>
<keyword id="KW-0597">Phosphoprotein</keyword>
<keyword id="KW-0346">Stress response</keyword>
<protein>
    <recommendedName>
        <fullName evidence="1">Chaperone protein DnaK</fullName>
    </recommendedName>
    <alternativeName>
        <fullName evidence="1">HSP70</fullName>
    </alternativeName>
    <alternativeName>
        <fullName evidence="1">Heat shock 70 kDa protein</fullName>
    </alternativeName>
    <alternativeName>
        <fullName evidence="1">Heat shock protein 70</fullName>
    </alternativeName>
</protein>
<gene>
    <name evidence="1" type="primary">dnaK</name>
    <name type="ordered locus">Aave_1226</name>
</gene>